<gene>
    <name evidence="1" type="primary">nrdR</name>
    <name type="ordered locus">SaurJH9_1743</name>
</gene>
<comment type="function">
    <text evidence="1">Negatively regulates transcription of bacterial ribonucleotide reductase nrd genes and operons by binding to NrdR-boxes.</text>
</comment>
<comment type="cofactor">
    <cofactor evidence="1">
        <name>Zn(2+)</name>
        <dbReference type="ChEBI" id="CHEBI:29105"/>
    </cofactor>
    <text evidence="1">Binds 1 zinc ion.</text>
</comment>
<comment type="similarity">
    <text evidence="1">Belongs to the NrdR family.</text>
</comment>
<protein>
    <recommendedName>
        <fullName evidence="1">Transcriptional repressor NrdR</fullName>
    </recommendedName>
</protein>
<keyword id="KW-0067">ATP-binding</keyword>
<keyword id="KW-0238">DNA-binding</keyword>
<keyword id="KW-0479">Metal-binding</keyword>
<keyword id="KW-0547">Nucleotide-binding</keyword>
<keyword id="KW-0678">Repressor</keyword>
<keyword id="KW-0804">Transcription</keyword>
<keyword id="KW-0805">Transcription regulation</keyword>
<keyword id="KW-0862">Zinc</keyword>
<keyword id="KW-0863">Zinc-finger</keyword>
<reference key="1">
    <citation type="submission" date="2007-05" db="EMBL/GenBank/DDBJ databases">
        <title>Complete sequence of chromosome of Staphylococcus aureus subsp. aureus JH9.</title>
        <authorList>
            <consortium name="US DOE Joint Genome Institute"/>
            <person name="Copeland A."/>
            <person name="Lucas S."/>
            <person name="Lapidus A."/>
            <person name="Barry K."/>
            <person name="Detter J.C."/>
            <person name="Glavina del Rio T."/>
            <person name="Hammon N."/>
            <person name="Israni S."/>
            <person name="Pitluck S."/>
            <person name="Chain P."/>
            <person name="Malfatti S."/>
            <person name="Shin M."/>
            <person name="Vergez L."/>
            <person name="Schmutz J."/>
            <person name="Larimer F."/>
            <person name="Land M."/>
            <person name="Hauser L."/>
            <person name="Kyrpides N."/>
            <person name="Kim E."/>
            <person name="Tomasz A."/>
            <person name="Richardson P."/>
        </authorList>
    </citation>
    <scope>NUCLEOTIDE SEQUENCE [LARGE SCALE GENOMIC DNA]</scope>
    <source>
        <strain>JH9</strain>
    </source>
</reference>
<accession>A5ITL0</accession>
<sequence>MKCPKCNSTQSKVVDSRHADELNAIRRRRECENCGTRFTTFEHIEVSQLIVVKKDGTREQFSREKILNGLVRSCEKRPVRYQQLEDITNKVEWQLRDEGHTEVSSRDIGEHVMNLLMHVDQVSYVRFASVYKEFKDVDQLLASMQGILSENKRSDA</sequence>
<dbReference type="EMBL" id="CP000703">
    <property type="protein sequence ID" value="ABQ49533.1"/>
    <property type="molecule type" value="Genomic_DNA"/>
</dbReference>
<dbReference type="RefSeq" id="WP_000650082.1">
    <property type="nucleotide sequence ID" value="NC_009487.1"/>
</dbReference>
<dbReference type="SMR" id="A5ITL0"/>
<dbReference type="GeneID" id="66839865"/>
<dbReference type="KEGG" id="saj:SaurJH9_1743"/>
<dbReference type="HOGENOM" id="CLU_108412_0_0_9"/>
<dbReference type="GO" id="GO:0005524">
    <property type="term" value="F:ATP binding"/>
    <property type="evidence" value="ECO:0007669"/>
    <property type="project" value="UniProtKB-KW"/>
</dbReference>
<dbReference type="GO" id="GO:0003677">
    <property type="term" value="F:DNA binding"/>
    <property type="evidence" value="ECO:0007669"/>
    <property type="project" value="UniProtKB-KW"/>
</dbReference>
<dbReference type="GO" id="GO:0008270">
    <property type="term" value="F:zinc ion binding"/>
    <property type="evidence" value="ECO:0007669"/>
    <property type="project" value="UniProtKB-UniRule"/>
</dbReference>
<dbReference type="GO" id="GO:0045892">
    <property type="term" value="P:negative regulation of DNA-templated transcription"/>
    <property type="evidence" value="ECO:0007669"/>
    <property type="project" value="UniProtKB-UniRule"/>
</dbReference>
<dbReference type="HAMAP" id="MF_00440">
    <property type="entry name" value="NrdR"/>
    <property type="match status" value="1"/>
</dbReference>
<dbReference type="InterPro" id="IPR005144">
    <property type="entry name" value="ATP-cone_dom"/>
</dbReference>
<dbReference type="InterPro" id="IPR055173">
    <property type="entry name" value="NrdR-like_N"/>
</dbReference>
<dbReference type="InterPro" id="IPR003796">
    <property type="entry name" value="RNR_NrdR-like"/>
</dbReference>
<dbReference type="NCBIfam" id="TIGR00244">
    <property type="entry name" value="transcriptional regulator NrdR"/>
    <property type="match status" value="1"/>
</dbReference>
<dbReference type="PANTHER" id="PTHR30455">
    <property type="entry name" value="TRANSCRIPTIONAL REPRESSOR NRDR"/>
    <property type="match status" value="1"/>
</dbReference>
<dbReference type="PANTHER" id="PTHR30455:SF2">
    <property type="entry name" value="TRANSCRIPTIONAL REPRESSOR NRDR"/>
    <property type="match status" value="1"/>
</dbReference>
<dbReference type="Pfam" id="PF03477">
    <property type="entry name" value="ATP-cone"/>
    <property type="match status" value="1"/>
</dbReference>
<dbReference type="Pfam" id="PF22811">
    <property type="entry name" value="Zn_ribbon_NrdR"/>
    <property type="match status" value="1"/>
</dbReference>
<dbReference type="PROSITE" id="PS51161">
    <property type="entry name" value="ATP_CONE"/>
    <property type="match status" value="1"/>
</dbReference>
<feature type="chain" id="PRO_1000080839" description="Transcriptional repressor NrdR">
    <location>
        <begin position="1"/>
        <end position="156"/>
    </location>
</feature>
<feature type="domain" description="ATP-cone" evidence="1">
    <location>
        <begin position="49"/>
        <end position="139"/>
    </location>
</feature>
<feature type="zinc finger region" evidence="1">
    <location>
        <begin position="3"/>
        <end position="34"/>
    </location>
</feature>
<proteinExistence type="inferred from homology"/>
<evidence type="ECO:0000255" key="1">
    <source>
        <dbReference type="HAMAP-Rule" id="MF_00440"/>
    </source>
</evidence>
<name>NRDR_STAA9</name>
<organism>
    <name type="scientific">Staphylococcus aureus (strain JH9)</name>
    <dbReference type="NCBI Taxonomy" id="359786"/>
    <lineage>
        <taxon>Bacteria</taxon>
        <taxon>Bacillati</taxon>
        <taxon>Bacillota</taxon>
        <taxon>Bacilli</taxon>
        <taxon>Bacillales</taxon>
        <taxon>Staphylococcaceae</taxon>
        <taxon>Staphylococcus</taxon>
    </lineage>
</organism>